<proteinExistence type="evidence at transcript level"/>
<accession>M2R8W9</accession>
<feature type="chain" id="PRO_0000444318" description="MFS siderochrome iron transporter 1">
    <location>
        <begin position="1"/>
        <end position="521"/>
    </location>
</feature>
<feature type="transmembrane region" description="Helical" evidence="1">
    <location>
        <begin position="62"/>
        <end position="82"/>
    </location>
</feature>
<feature type="transmembrane region" description="Helical" evidence="1">
    <location>
        <begin position="99"/>
        <end position="119"/>
    </location>
</feature>
<feature type="transmembrane region" description="Helical" evidence="1">
    <location>
        <begin position="126"/>
        <end position="146"/>
    </location>
</feature>
<feature type="transmembrane region" description="Helical" evidence="1">
    <location>
        <begin position="148"/>
        <end position="168"/>
    </location>
</feature>
<feature type="transmembrane region" description="Helical" evidence="1">
    <location>
        <begin position="187"/>
        <end position="207"/>
    </location>
</feature>
<feature type="transmembrane region" description="Helical" evidence="1">
    <location>
        <begin position="229"/>
        <end position="249"/>
    </location>
</feature>
<feature type="transmembrane region" description="Helical" evidence="1">
    <location>
        <begin position="330"/>
        <end position="350"/>
    </location>
</feature>
<feature type="transmembrane region" description="Helical" evidence="1">
    <location>
        <begin position="379"/>
        <end position="399"/>
    </location>
</feature>
<feature type="transmembrane region" description="Helical" evidence="1">
    <location>
        <begin position="404"/>
        <end position="424"/>
    </location>
</feature>
<feature type="transmembrane region" description="Helical" evidence="1">
    <location>
        <begin position="431"/>
        <end position="451"/>
    </location>
</feature>
<feature type="transmembrane region" description="Helical" evidence="1">
    <location>
        <begin position="466"/>
        <end position="486"/>
    </location>
</feature>
<feature type="transmembrane region" description="Helical" evidence="1">
    <location>
        <begin position="491"/>
        <end position="511"/>
    </location>
</feature>
<feature type="region of interest" description="Disordered" evidence="3">
    <location>
        <begin position="1"/>
        <end position="29"/>
    </location>
</feature>
<feature type="compositionally biased region" description="Polar residues" evidence="3">
    <location>
        <begin position="1"/>
        <end position="10"/>
    </location>
</feature>
<feature type="compositionally biased region" description="Basic and acidic residues" evidence="3">
    <location>
        <begin position="11"/>
        <end position="29"/>
    </location>
</feature>
<feature type="glycosylation site" description="N-linked (GlcNAc...) asparagine" evidence="2">
    <location>
        <position position="209"/>
    </location>
</feature>
<feature type="glycosylation site" description="N-linked (GlcNAc...) asparagine" evidence="2">
    <location>
        <position position="487"/>
    </location>
</feature>
<reference key="1">
    <citation type="journal article" date="2012" name="Proc. Natl. Acad. Sci. U.S.A.">
        <title>Comparative genomics of Ceriporiopsis subvermispora and Phanerochaete chrysosporium provide insight into selective ligninolysis.</title>
        <authorList>
            <person name="Fernandez-Fueyo E."/>
            <person name="Ruiz-Duenas F.J."/>
            <person name="Ferreira P."/>
            <person name="Floudas D."/>
            <person name="Hibbett D.S."/>
            <person name="Canessa P."/>
            <person name="Larrondo L.F."/>
            <person name="James T.Y."/>
            <person name="Seelenfreund D."/>
            <person name="Lobos S."/>
            <person name="Polanco R."/>
            <person name="Tello M."/>
            <person name="Honda Y."/>
            <person name="Watanabe T."/>
            <person name="Watanabe T."/>
            <person name="Ryu J.S."/>
            <person name="Kubicek C.P."/>
            <person name="Schmoll M."/>
            <person name="Gaskell J."/>
            <person name="Hammel K.E."/>
            <person name="St John F.J."/>
            <person name="Vanden Wymelenberg A."/>
            <person name="Sabat G."/>
            <person name="Splinter BonDurant S."/>
            <person name="Syed K."/>
            <person name="Yadav J.S."/>
            <person name="Doddapaneni H."/>
            <person name="Subramanian V."/>
            <person name="Lavin J.L."/>
            <person name="Oguiza J.A."/>
            <person name="Perez G."/>
            <person name="Pisabarro A.G."/>
            <person name="Ramirez L."/>
            <person name="Santoyo F."/>
            <person name="Master E."/>
            <person name="Coutinho P.M."/>
            <person name="Henrissat B."/>
            <person name="Lombard V."/>
            <person name="Magnuson J.K."/>
            <person name="Kuees U."/>
            <person name="Hori C."/>
            <person name="Igarashi K."/>
            <person name="Samejima M."/>
            <person name="Held B.W."/>
            <person name="Barry K.W."/>
            <person name="LaButti K.M."/>
            <person name="Lapidus A."/>
            <person name="Lindquist E.A."/>
            <person name="Lucas S.M."/>
            <person name="Riley R."/>
            <person name="Salamov A.A."/>
            <person name="Hoffmeister D."/>
            <person name="Schwenk D."/>
            <person name="Hadar Y."/>
            <person name="Yarden O."/>
            <person name="de Vries R.P."/>
            <person name="Wiebenga A."/>
            <person name="Stenlid J."/>
            <person name="Eastwood D."/>
            <person name="Grigoriev I.V."/>
            <person name="Berka R.M."/>
            <person name="Blanchette R.A."/>
            <person name="Kersten P."/>
            <person name="Martinez A.T."/>
            <person name="Vicuna R."/>
            <person name="Cullen D."/>
        </authorList>
    </citation>
    <scope>NUCLEOTIDE SEQUENCE [LARGE SCALE GENOMIC DNA]</scope>
    <source>
        <strain>B</strain>
    </source>
</reference>
<reference key="2">
    <citation type="journal article" date="2017" name="Appl. Environ. Microbiol.">
        <title>A highly conserved basidiomycete peptide synthetase produces a trimeric hydroxamate siderophore.</title>
        <authorList>
            <person name="Brandenburger E."/>
            <person name="Gressler M."/>
            <person name="Leonhardt R."/>
            <person name="Lackner G."/>
            <person name="Habel A."/>
            <person name="Hertweck C."/>
            <person name="Brock M."/>
            <person name="Hoffmeister D."/>
        </authorList>
    </citation>
    <scope>INDUCTION</scope>
    <scope>FUNCTION</scope>
    <source>
        <strain>B</strain>
    </source>
</reference>
<sequence length="521" mass="56014">MDKTASLTSQDAEKHDPDALRKERATDPPDLFEHGALDPVYQAKAHLIASAIQEIGMGKYQWGLFVVAGFGWFSDSVWPLMGSLILSPVVNEFQFNSPFLSLALNAGLLAGAIFWAFGCDIWGRRWSFNLSLLIAGAFGLAAGGTQNFVALACLFAVVGFGVGGNMPVDSAVFLDFVPGSYQYLLTILSIWWSIGQLVASLIAWPLIANFSCPIGSTTCTRADNMGWRYLLFTLGGMTLLLWAIRFFVFPLMESPRFLVGRGRDAEAIAVIQRIAQFNGRPSSLTLEELAMVAEKAAPKDAVATQRRQVLSQSSDFSTDHVKGLFATPKLAWSTSLLIALWGIIGLASTLYNSFLPFLLANRGAEFGDSSYFITYRNQVIIAVLGVPGAFLAGWAVEQPYLGRKGTLAISAGLTGVFLFATTTARSSNALLGWNCGYAFHSNIMYGVLYAISPEVFPAKDRGTGNGLTATATRVFGLIAPVIALYANLSTAVPVYVSGALIIASGAMALLLPYEPRGRASL</sequence>
<name>MFS1_CERS8</name>
<protein>
    <recommendedName>
        <fullName evidence="5">MFS siderochrome iron transporter 1</fullName>
    </recommendedName>
</protein>
<comment type="function">
    <text evidence="7">Major facilitator transporter probably involved in siderophore basidioferrin transmembrane transport (PubMed:28842536).</text>
</comment>
<comment type="subcellular location">
    <subcellularLocation>
        <location evidence="6">Membrane</location>
        <topology evidence="1">Multi-pass membrane protein</topology>
    </subcellularLocation>
</comment>
<comment type="induction">
    <text evidence="4">Expression is induced under iron-depleted conditions (PubMed:28842536).</text>
</comment>
<comment type="similarity">
    <text evidence="6">Belongs to the major facilitator superfamily.</text>
</comment>
<dbReference type="EMBL" id="KB445801">
    <property type="protein sequence ID" value="EMD35186.1"/>
    <property type="molecule type" value="Genomic_DNA"/>
</dbReference>
<dbReference type="SMR" id="M2R8W9"/>
<dbReference type="STRING" id="914234.M2R8W9"/>
<dbReference type="GlyCosmos" id="M2R8W9">
    <property type="glycosylation" value="2 sites, No reported glycans"/>
</dbReference>
<dbReference type="HOGENOM" id="CLU_001265_52_4_1"/>
<dbReference type="OrthoDB" id="3936150at2759"/>
<dbReference type="Proteomes" id="UP000016930">
    <property type="component" value="Unassembled WGS sequence"/>
</dbReference>
<dbReference type="GO" id="GO:0016020">
    <property type="term" value="C:membrane"/>
    <property type="evidence" value="ECO:0007669"/>
    <property type="project" value="UniProtKB-SubCell"/>
</dbReference>
<dbReference type="GO" id="GO:0022857">
    <property type="term" value="F:transmembrane transporter activity"/>
    <property type="evidence" value="ECO:0007669"/>
    <property type="project" value="InterPro"/>
</dbReference>
<dbReference type="CDD" id="cd17316">
    <property type="entry name" value="MFS_SV2_like"/>
    <property type="match status" value="1"/>
</dbReference>
<dbReference type="FunFam" id="1.20.1250.20:FF:000171">
    <property type="entry name" value="MFS general substrate transporter"/>
    <property type="match status" value="1"/>
</dbReference>
<dbReference type="Gene3D" id="1.20.1250.20">
    <property type="entry name" value="MFS general substrate transporter like domains"/>
    <property type="match status" value="1"/>
</dbReference>
<dbReference type="InterPro" id="IPR020846">
    <property type="entry name" value="MFS_dom"/>
</dbReference>
<dbReference type="InterPro" id="IPR005828">
    <property type="entry name" value="MFS_sugar_transport-like"/>
</dbReference>
<dbReference type="InterPro" id="IPR036259">
    <property type="entry name" value="MFS_trans_sf"/>
</dbReference>
<dbReference type="PANTHER" id="PTHR23511">
    <property type="entry name" value="SYNAPTIC VESICLE GLYCOPROTEIN 2"/>
    <property type="match status" value="1"/>
</dbReference>
<dbReference type="PANTHER" id="PTHR23511:SF12">
    <property type="entry name" value="TRANSPORTER, PUTATIVE (AFU_ORTHOLOGUE AFUA_7G01740)-RELATED"/>
    <property type="match status" value="1"/>
</dbReference>
<dbReference type="Pfam" id="PF00083">
    <property type="entry name" value="Sugar_tr"/>
    <property type="match status" value="1"/>
</dbReference>
<dbReference type="SUPFAM" id="SSF103473">
    <property type="entry name" value="MFS general substrate transporter"/>
    <property type="match status" value="1"/>
</dbReference>
<dbReference type="PROSITE" id="PS50850">
    <property type="entry name" value="MFS"/>
    <property type="match status" value="1"/>
</dbReference>
<evidence type="ECO:0000255" key="1"/>
<evidence type="ECO:0000255" key="2">
    <source>
        <dbReference type="PROSITE-ProRule" id="PRU00498"/>
    </source>
</evidence>
<evidence type="ECO:0000256" key="3">
    <source>
        <dbReference type="SAM" id="MobiDB-lite"/>
    </source>
</evidence>
<evidence type="ECO:0000269" key="4">
    <source>
    </source>
</evidence>
<evidence type="ECO:0000303" key="5">
    <source>
    </source>
</evidence>
<evidence type="ECO:0000305" key="6"/>
<evidence type="ECO:0000305" key="7">
    <source>
    </source>
</evidence>
<organism>
    <name type="scientific">Ceriporiopsis subvermispora (strain B)</name>
    <name type="common">White-rot fungus</name>
    <name type="synonym">Gelatoporia subvermispora</name>
    <dbReference type="NCBI Taxonomy" id="914234"/>
    <lineage>
        <taxon>Eukaryota</taxon>
        <taxon>Fungi</taxon>
        <taxon>Dikarya</taxon>
        <taxon>Basidiomycota</taxon>
        <taxon>Agaricomycotina</taxon>
        <taxon>Agaricomycetes</taxon>
        <taxon>Polyporales</taxon>
        <taxon>Gelatoporiaceae</taxon>
        <taxon>Gelatoporia</taxon>
    </lineage>
</organism>
<keyword id="KW-0325">Glycoprotein</keyword>
<keyword id="KW-0472">Membrane</keyword>
<keyword id="KW-1185">Reference proteome</keyword>
<keyword id="KW-0812">Transmembrane</keyword>
<keyword id="KW-1133">Transmembrane helix</keyword>
<keyword id="KW-0813">Transport</keyword>
<gene>
    <name evidence="5" type="primary">mfs1</name>
    <name type="ORF">CERSUDRAFT_116654</name>
</gene>